<protein>
    <recommendedName>
        <fullName evidence="1">4-hydroxy-tetrahydrodipicolinate reductase</fullName>
        <shortName evidence="1">HTPA reductase</shortName>
        <ecNumber evidence="1">1.17.1.8</ecNumber>
    </recommendedName>
</protein>
<reference key="1">
    <citation type="submission" date="2009-04" db="EMBL/GenBank/DDBJ databases">
        <title>Genome sequence of Bacillus anthracis A0248.</title>
        <authorList>
            <person name="Dodson R.J."/>
            <person name="Munk A.C."/>
            <person name="Bruce D."/>
            <person name="Detter C."/>
            <person name="Tapia R."/>
            <person name="Sutton G."/>
            <person name="Sims D."/>
            <person name="Brettin T."/>
        </authorList>
    </citation>
    <scope>NUCLEOTIDE SEQUENCE [LARGE SCALE GENOMIC DNA]</scope>
    <source>
        <strain>A0248</strain>
    </source>
</reference>
<accession>C3P5Q2</accession>
<proteinExistence type="inferred from homology"/>
<organism>
    <name type="scientific">Bacillus anthracis (strain A0248)</name>
    <dbReference type="NCBI Taxonomy" id="592021"/>
    <lineage>
        <taxon>Bacteria</taxon>
        <taxon>Bacillati</taxon>
        <taxon>Bacillota</taxon>
        <taxon>Bacilli</taxon>
        <taxon>Bacillales</taxon>
        <taxon>Bacillaceae</taxon>
        <taxon>Bacillus</taxon>
        <taxon>Bacillus cereus group</taxon>
    </lineage>
</organism>
<keyword id="KW-0028">Amino-acid biosynthesis</keyword>
<keyword id="KW-0963">Cytoplasm</keyword>
<keyword id="KW-0220">Diaminopimelate biosynthesis</keyword>
<keyword id="KW-0457">Lysine biosynthesis</keyword>
<keyword id="KW-0520">NAD</keyword>
<keyword id="KW-0521">NADP</keyword>
<keyword id="KW-0560">Oxidoreductase</keyword>
<feature type="chain" id="PRO_1000118839" description="4-hydroxy-tetrahydrodipicolinate reductase">
    <location>
        <begin position="1"/>
        <end position="266"/>
    </location>
</feature>
<feature type="active site" description="Proton donor/acceptor" evidence="1">
    <location>
        <position position="155"/>
    </location>
</feature>
<feature type="active site" description="Proton donor" evidence="1">
    <location>
        <position position="159"/>
    </location>
</feature>
<feature type="binding site" evidence="1">
    <location>
        <begin position="10"/>
        <end position="15"/>
    </location>
    <ligand>
        <name>NAD(+)</name>
        <dbReference type="ChEBI" id="CHEBI:57540"/>
    </ligand>
</feature>
<feature type="binding site" evidence="1">
    <location>
        <position position="38"/>
    </location>
    <ligand>
        <name>NADP(+)</name>
        <dbReference type="ChEBI" id="CHEBI:58349"/>
    </ligand>
</feature>
<feature type="binding site" evidence="1">
    <location>
        <begin position="99"/>
        <end position="101"/>
    </location>
    <ligand>
        <name>NAD(+)</name>
        <dbReference type="ChEBI" id="CHEBI:57540"/>
    </ligand>
</feature>
<feature type="binding site" evidence="1">
    <location>
        <begin position="125"/>
        <end position="128"/>
    </location>
    <ligand>
        <name>NAD(+)</name>
        <dbReference type="ChEBI" id="CHEBI:57540"/>
    </ligand>
</feature>
<feature type="binding site" evidence="1">
    <location>
        <position position="156"/>
    </location>
    <ligand>
        <name>(S)-2,3,4,5-tetrahydrodipicolinate</name>
        <dbReference type="ChEBI" id="CHEBI:16845"/>
    </ligand>
</feature>
<feature type="binding site" evidence="1">
    <location>
        <begin position="165"/>
        <end position="166"/>
    </location>
    <ligand>
        <name>(S)-2,3,4,5-tetrahydrodipicolinate</name>
        <dbReference type="ChEBI" id="CHEBI:16845"/>
    </ligand>
</feature>
<name>DAPB_BACAA</name>
<gene>
    <name evidence="1" type="primary">dapB</name>
    <name type="ordered locus">BAA_1622</name>
</gene>
<evidence type="ECO:0000255" key="1">
    <source>
        <dbReference type="HAMAP-Rule" id="MF_00102"/>
    </source>
</evidence>
<evidence type="ECO:0000305" key="2"/>
<comment type="function">
    <text evidence="1">Catalyzes the conversion of 4-hydroxy-tetrahydrodipicolinate (HTPA) to tetrahydrodipicolinate.</text>
</comment>
<comment type="catalytic activity">
    <reaction evidence="1">
        <text>(S)-2,3,4,5-tetrahydrodipicolinate + NAD(+) + H2O = (2S,4S)-4-hydroxy-2,3,4,5-tetrahydrodipicolinate + NADH + H(+)</text>
        <dbReference type="Rhea" id="RHEA:35323"/>
        <dbReference type="ChEBI" id="CHEBI:15377"/>
        <dbReference type="ChEBI" id="CHEBI:15378"/>
        <dbReference type="ChEBI" id="CHEBI:16845"/>
        <dbReference type="ChEBI" id="CHEBI:57540"/>
        <dbReference type="ChEBI" id="CHEBI:57945"/>
        <dbReference type="ChEBI" id="CHEBI:67139"/>
        <dbReference type="EC" id="1.17.1.8"/>
    </reaction>
</comment>
<comment type="catalytic activity">
    <reaction evidence="1">
        <text>(S)-2,3,4,5-tetrahydrodipicolinate + NADP(+) + H2O = (2S,4S)-4-hydroxy-2,3,4,5-tetrahydrodipicolinate + NADPH + H(+)</text>
        <dbReference type="Rhea" id="RHEA:35331"/>
        <dbReference type="ChEBI" id="CHEBI:15377"/>
        <dbReference type="ChEBI" id="CHEBI:15378"/>
        <dbReference type="ChEBI" id="CHEBI:16845"/>
        <dbReference type="ChEBI" id="CHEBI:57783"/>
        <dbReference type="ChEBI" id="CHEBI:58349"/>
        <dbReference type="ChEBI" id="CHEBI:67139"/>
        <dbReference type="EC" id="1.17.1.8"/>
    </reaction>
</comment>
<comment type="pathway">
    <text evidence="1">Amino-acid biosynthesis; L-lysine biosynthesis via DAP pathway; (S)-tetrahydrodipicolinate from L-aspartate: step 4/4.</text>
</comment>
<comment type="subcellular location">
    <subcellularLocation>
        <location evidence="1">Cytoplasm</location>
    </subcellularLocation>
</comment>
<comment type="similarity">
    <text evidence="1">Belongs to the DapB family.</text>
</comment>
<comment type="caution">
    <text evidence="2">Was originally thought to be a dihydrodipicolinate reductase (DHDPR), catalyzing the conversion of dihydrodipicolinate to tetrahydrodipicolinate. However, it was shown in E.coli that the substrate of the enzymatic reaction is not dihydrodipicolinate (DHDP) but in fact (2S,4S)-4-hydroxy-2,3,4,5-tetrahydrodipicolinic acid (HTPA), the product released by the DapA-catalyzed reaction.</text>
</comment>
<sequence>MKEMKVIIAGPRGRMGHEAVLLMERTEHFNLVAAVDYKHGGEKISDLPGMPALDATIYADLHTCLEEVEADVLLDLTTPEVGKQHVTLAVERGLRSVIGTTGFTEEELKQLTETAKEKAVGTIIAPNFAIGAVLMMKFSQMAAKYFQDVEVIELHHDQKLDAPSGTAVKTVELIRQNRESKQQGHPNEVEQLEGARGANVDGIHIHSVRLPGLIAHQEVMFGGDGQMLTVRHDSFNRASFMSGVKLSIETVMNLDHLVYGLENIID</sequence>
<dbReference type="EC" id="1.17.1.8" evidence="1"/>
<dbReference type="EMBL" id="CP001598">
    <property type="protein sequence ID" value="ACQ46260.1"/>
    <property type="molecule type" value="Genomic_DNA"/>
</dbReference>
<dbReference type="RefSeq" id="WP_000661726.1">
    <property type="nucleotide sequence ID" value="NC_012659.1"/>
</dbReference>
<dbReference type="SMR" id="C3P5Q2"/>
<dbReference type="GeneID" id="45021527"/>
<dbReference type="KEGG" id="bai:BAA_1622"/>
<dbReference type="HOGENOM" id="CLU_047479_0_1_9"/>
<dbReference type="UniPathway" id="UPA00034">
    <property type="reaction ID" value="UER00018"/>
</dbReference>
<dbReference type="GO" id="GO:0005829">
    <property type="term" value="C:cytosol"/>
    <property type="evidence" value="ECO:0007669"/>
    <property type="project" value="TreeGrafter"/>
</dbReference>
<dbReference type="GO" id="GO:0008839">
    <property type="term" value="F:4-hydroxy-tetrahydrodipicolinate reductase"/>
    <property type="evidence" value="ECO:0007669"/>
    <property type="project" value="UniProtKB-EC"/>
</dbReference>
<dbReference type="GO" id="GO:0051287">
    <property type="term" value="F:NAD binding"/>
    <property type="evidence" value="ECO:0007669"/>
    <property type="project" value="UniProtKB-UniRule"/>
</dbReference>
<dbReference type="GO" id="GO:0050661">
    <property type="term" value="F:NADP binding"/>
    <property type="evidence" value="ECO:0007669"/>
    <property type="project" value="UniProtKB-UniRule"/>
</dbReference>
<dbReference type="GO" id="GO:0016726">
    <property type="term" value="F:oxidoreductase activity, acting on CH or CH2 groups, NAD or NADP as acceptor"/>
    <property type="evidence" value="ECO:0007669"/>
    <property type="project" value="UniProtKB-UniRule"/>
</dbReference>
<dbReference type="GO" id="GO:0019877">
    <property type="term" value="P:diaminopimelate biosynthetic process"/>
    <property type="evidence" value="ECO:0007669"/>
    <property type="project" value="UniProtKB-UniRule"/>
</dbReference>
<dbReference type="GO" id="GO:0009089">
    <property type="term" value="P:lysine biosynthetic process via diaminopimelate"/>
    <property type="evidence" value="ECO:0007669"/>
    <property type="project" value="UniProtKB-UniRule"/>
</dbReference>
<dbReference type="CDD" id="cd02274">
    <property type="entry name" value="DHDPR_N"/>
    <property type="match status" value="1"/>
</dbReference>
<dbReference type="FunFam" id="3.30.360.10:FF:000009">
    <property type="entry name" value="4-hydroxy-tetrahydrodipicolinate reductase"/>
    <property type="match status" value="1"/>
</dbReference>
<dbReference type="FunFam" id="3.40.50.720:FF:000180">
    <property type="entry name" value="4-hydroxy-tetrahydrodipicolinate reductase"/>
    <property type="match status" value="1"/>
</dbReference>
<dbReference type="Gene3D" id="3.30.360.10">
    <property type="entry name" value="Dihydrodipicolinate Reductase, domain 2"/>
    <property type="match status" value="1"/>
</dbReference>
<dbReference type="Gene3D" id="3.40.50.720">
    <property type="entry name" value="NAD(P)-binding Rossmann-like Domain"/>
    <property type="match status" value="1"/>
</dbReference>
<dbReference type="HAMAP" id="MF_00102">
    <property type="entry name" value="DapB"/>
    <property type="match status" value="1"/>
</dbReference>
<dbReference type="InterPro" id="IPR022663">
    <property type="entry name" value="DapB_C"/>
</dbReference>
<dbReference type="InterPro" id="IPR000846">
    <property type="entry name" value="DapB_N"/>
</dbReference>
<dbReference type="InterPro" id="IPR022664">
    <property type="entry name" value="DapB_N_CS"/>
</dbReference>
<dbReference type="InterPro" id="IPR023940">
    <property type="entry name" value="DHDPR_bac"/>
</dbReference>
<dbReference type="InterPro" id="IPR036291">
    <property type="entry name" value="NAD(P)-bd_dom_sf"/>
</dbReference>
<dbReference type="NCBIfam" id="TIGR00036">
    <property type="entry name" value="dapB"/>
    <property type="match status" value="1"/>
</dbReference>
<dbReference type="PANTHER" id="PTHR20836:SF0">
    <property type="entry name" value="4-HYDROXY-TETRAHYDRODIPICOLINATE REDUCTASE 1, CHLOROPLASTIC-RELATED"/>
    <property type="match status" value="1"/>
</dbReference>
<dbReference type="PANTHER" id="PTHR20836">
    <property type="entry name" value="DIHYDRODIPICOLINATE REDUCTASE"/>
    <property type="match status" value="1"/>
</dbReference>
<dbReference type="Pfam" id="PF05173">
    <property type="entry name" value="DapB_C"/>
    <property type="match status" value="1"/>
</dbReference>
<dbReference type="Pfam" id="PF01113">
    <property type="entry name" value="DapB_N"/>
    <property type="match status" value="1"/>
</dbReference>
<dbReference type="PIRSF" id="PIRSF000161">
    <property type="entry name" value="DHPR"/>
    <property type="match status" value="1"/>
</dbReference>
<dbReference type="SUPFAM" id="SSF55347">
    <property type="entry name" value="Glyceraldehyde-3-phosphate dehydrogenase-like, C-terminal domain"/>
    <property type="match status" value="1"/>
</dbReference>
<dbReference type="SUPFAM" id="SSF51735">
    <property type="entry name" value="NAD(P)-binding Rossmann-fold domains"/>
    <property type="match status" value="1"/>
</dbReference>
<dbReference type="PROSITE" id="PS01298">
    <property type="entry name" value="DAPB"/>
    <property type="match status" value="1"/>
</dbReference>